<gene>
    <name type="primary">ECM2</name>
</gene>
<dbReference type="EMBL" id="BC105232">
    <property type="protein sequence ID" value="AAI05233.1"/>
    <property type="molecule type" value="mRNA"/>
</dbReference>
<dbReference type="RefSeq" id="NP_001029769.1">
    <property type="nucleotide sequence ID" value="NM_001034597.1"/>
</dbReference>
<dbReference type="SMR" id="Q3MHH9"/>
<dbReference type="FunCoup" id="Q3MHH9">
    <property type="interactions" value="109"/>
</dbReference>
<dbReference type="STRING" id="9913.ENSBTAP00000015726"/>
<dbReference type="GlyCosmos" id="Q3MHH9">
    <property type="glycosylation" value="3 sites, No reported glycans"/>
</dbReference>
<dbReference type="GlyGen" id="Q3MHH9">
    <property type="glycosylation" value="3 sites"/>
</dbReference>
<dbReference type="PaxDb" id="9913-ENSBTAP00000015726"/>
<dbReference type="GeneID" id="533916"/>
<dbReference type="KEGG" id="bta:533916"/>
<dbReference type="CTD" id="1842"/>
<dbReference type="eggNOG" id="KOG0619">
    <property type="taxonomic scope" value="Eukaryota"/>
</dbReference>
<dbReference type="InParanoid" id="Q3MHH9"/>
<dbReference type="OrthoDB" id="676979at2759"/>
<dbReference type="Proteomes" id="UP000009136">
    <property type="component" value="Unplaced"/>
</dbReference>
<dbReference type="GO" id="GO:0031012">
    <property type="term" value="C:extracellular matrix"/>
    <property type="evidence" value="ECO:0000318"/>
    <property type="project" value="GO_Central"/>
</dbReference>
<dbReference type="GO" id="GO:0005576">
    <property type="term" value="C:extracellular region"/>
    <property type="evidence" value="ECO:0007669"/>
    <property type="project" value="UniProtKB-KW"/>
</dbReference>
<dbReference type="GO" id="GO:0070052">
    <property type="term" value="F:collagen V binding"/>
    <property type="evidence" value="ECO:0000318"/>
    <property type="project" value="GO_Central"/>
</dbReference>
<dbReference type="GO" id="GO:0008201">
    <property type="term" value="F:heparin binding"/>
    <property type="evidence" value="ECO:0000318"/>
    <property type="project" value="GO_Central"/>
</dbReference>
<dbReference type="GO" id="GO:0030198">
    <property type="term" value="P:extracellular matrix organization"/>
    <property type="evidence" value="ECO:0000318"/>
    <property type="project" value="GO_Central"/>
</dbReference>
<dbReference type="GO" id="GO:0010811">
    <property type="term" value="P:positive regulation of cell-substrate adhesion"/>
    <property type="evidence" value="ECO:0000318"/>
    <property type="project" value="GO_Central"/>
</dbReference>
<dbReference type="FunFam" id="3.80.10.10:FF:000130">
    <property type="entry name" value="extracellular matrix protein 2 isoform X1"/>
    <property type="match status" value="1"/>
</dbReference>
<dbReference type="FunFam" id="3.80.10.10:FF:000284">
    <property type="entry name" value="extracellular matrix protein 2 isoform X1"/>
    <property type="match status" value="1"/>
</dbReference>
<dbReference type="FunFam" id="3.80.10.10:FF:000332">
    <property type="entry name" value="extracellular matrix protein 2 isoform X1"/>
    <property type="match status" value="1"/>
</dbReference>
<dbReference type="Gene3D" id="6.20.200.20">
    <property type="match status" value="1"/>
</dbReference>
<dbReference type="Gene3D" id="3.80.10.10">
    <property type="entry name" value="Ribonuclease Inhibitor"/>
    <property type="match status" value="3"/>
</dbReference>
<dbReference type="InterPro" id="IPR043184">
    <property type="entry name" value="ECM2"/>
</dbReference>
<dbReference type="InterPro" id="IPR001611">
    <property type="entry name" value="Leu-rich_rpt"/>
</dbReference>
<dbReference type="InterPro" id="IPR003591">
    <property type="entry name" value="Leu-rich_rpt_typical-subtyp"/>
</dbReference>
<dbReference type="InterPro" id="IPR032675">
    <property type="entry name" value="LRR_dom_sf"/>
</dbReference>
<dbReference type="InterPro" id="IPR001007">
    <property type="entry name" value="VWF_dom"/>
</dbReference>
<dbReference type="PANTHER" id="PTHR46544:SF1">
    <property type="entry name" value="EXTRACELLULAR MATRIX PROTEIN 2"/>
    <property type="match status" value="1"/>
</dbReference>
<dbReference type="PANTHER" id="PTHR46544">
    <property type="entry name" value="EXTRACELLULAR MATRIX PROTEIN 2-RELATED"/>
    <property type="match status" value="1"/>
</dbReference>
<dbReference type="Pfam" id="PF13855">
    <property type="entry name" value="LRR_8"/>
    <property type="match status" value="4"/>
</dbReference>
<dbReference type="Pfam" id="PF00093">
    <property type="entry name" value="VWC"/>
    <property type="match status" value="1"/>
</dbReference>
<dbReference type="SMART" id="SM00364">
    <property type="entry name" value="LRR_BAC"/>
    <property type="match status" value="5"/>
</dbReference>
<dbReference type="SMART" id="SM00369">
    <property type="entry name" value="LRR_TYP"/>
    <property type="match status" value="11"/>
</dbReference>
<dbReference type="SMART" id="SM00214">
    <property type="entry name" value="VWC"/>
    <property type="match status" value="1"/>
</dbReference>
<dbReference type="SUPFAM" id="SSF57603">
    <property type="entry name" value="FnI-like domain"/>
    <property type="match status" value="1"/>
</dbReference>
<dbReference type="SUPFAM" id="SSF52058">
    <property type="entry name" value="L domain-like"/>
    <property type="match status" value="1"/>
</dbReference>
<dbReference type="PROSITE" id="PS51450">
    <property type="entry name" value="LRR"/>
    <property type="match status" value="13"/>
</dbReference>
<dbReference type="PROSITE" id="PS01208">
    <property type="entry name" value="VWFC_1"/>
    <property type="match status" value="1"/>
</dbReference>
<dbReference type="PROSITE" id="PS50184">
    <property type="entry name" value="VWFC_2"/>
    <property type="match status" value="1"/>
</dbReference>
<organism>
    <name type="scientific">Bos taurus</name>
    <name type="common">Bovine</name>
    <dbReference type="NCBI Taxonomy" id="9913"/>
    <lineage>
        <taxon>Eukaryota</taxon>
        <taxon>Metazoa</taxon>
        <taxon>Chordata</taxon>
        <taxon>Craniata</taxon>
        <taxon>Vertebrata</taxon>
        <taxon>Euteleostomi</taxon>
        <taxon>Mammalia</taxon>
        <taxon>Eutheria</taxon>
        <taxon>Laurasiatheria</taxon>
        <taxon>Artiodactyla</taxon>
        <taxon>Ruminantia</taxon>
        <taxon>Pecora</taxon>
        <taxon>Bovidae</taxon>
        <taxon>Bovinae</taxon>
        <taxon>Bos</taxon>
    </lineage>
</organism>
<keyword id="KW-0272">Extracellular matrix</keyword>
<keyword id="KW-0325">Glycoprotein</keyword>
<keyword id="KW-0433">Leucine-rich repeat</keyword>
<keyword id="KW-1185">Reference proteome</keyword>
<keyword id="KW-0677">Repeat</keyword>
<keyword id="KW-0964">Secreted</keyword>
<keyword id="KW-0732">Signal</keyword>
<proteinExistence type="evidence at transcript level"/>
<sequence>MKFSSLYCFLLLLIFQTDFGQNEETSRRQRRKMYHRRLRKSSLSTHRSVRQPGIQQMKTVTPAAKLPIINLDYSIEENFESFLSVPGVESSYNVLPGKKGHCLANGMIMYNKAVWSPEPCTTCLCLNGKVLCDETKCHPQMCPQTIIPEGECCPVCSNTEQREPTNLPHKQQSPPWEEMNRALRKEELQLEEDEEEVKQDENREQKKKTFRPGDWGRPINEGQSREGKAQRPEEEGRQAHQHRNPARENEEDDDEEEEDDDDEEEDDDDEDETIRGDTFRMPPRLPIPATPRGIPSLPSMCSLSYKTISCISADLTQIPPLTAPEITSLELIDNSITSIPDEAFNGLPNLERLDLSKNNITSSGIGPKAFKFLKNLMRLNMDGNNLVTIPSELPSTLEELKINENKLQVIDEESLSDLNQLVTLELEGNNLSETNVNSLAFKPLKSLSYLRLGRNKFRIIPQGLPASIEELYLENNQIEEITEISFNHTRKINVIGLRYNKIEENRIAPLAWINQENLESIDLSYNKLYHVPSYLPKSLVHLVLIGNQIERIPGYVFGHMEPGLEYLYLSFNKLVDDGIDRVSFYGAYHSLRELFLDHNELKSIPPGVQEMKALHFLRLNNNKIRNILPEQICNAEEDDDSNLQHLHLENNYIKTREIPSYAFSCIRSYSSIVLKPQNIK</sequence>
<protein>
    <recommendedName>
        <fullName>Extracellular matrix protein 2</fullName>
    </recommendedName>
</protein>
<comment type="function">
    <text evidence="1">Promotes matrix assembly and cell adhesiveness.</text>
</comment>
<comment type="subunit">
    <text evidence="1">Interacts with numerous extracellular matrix proteins (By similarity). Interacts with MSL1 and RASSF1 (By similarity).</text>
</comment>
<comment type="subcellular location">
    <subcellularLocation>
        <location evidence="1">Secreted</location>
        <location evidence="1">Extracellular space</location>
        <location evidence="1">Extracellular matrix</location>
    </subcellularLocation>
</comment>
<comment type="similarity">
    <text evidence="5">Belongs to the small leucine-rich proteoglycan (SLRP) family. SLRP class I subfamily.</text>
</comment>
<reference key="1">
    <citation type="submission" date="2005-09" db="EMBL/GenBank/DDBJ databases">
        <authorList>
            <consortium name="NIH - Mammalian Gene Collection (MGC) project"/>
        </authorList>
    </citation>
    <scope>NUCLEOTIDE SEQUENCE [LARGE SCALE MRNA]</scope>
    <source>
        <strain>Hereford</strain>
        <tissue>Heart ventricle</tissue>
    </source>
</reference>
<feature type="signal peptide" evidence="2">
    <location>
        <begin position="1"/>
        <end position="20"/>
    </location>
</feature>
<feature type="chain" id="PRO_0000287727" description="Extracellular matrix protein 2">
    <location>
        <begin position="21"/>
        <end position="680"/>
    </location>
</feature>
<feature type="domain" description="VWFC" evidence="3">
    <location>
        <begin position="100"/>
        <end position="157"/>
    </location>
</feature>
<feature type="domain" description="LRRNT">
    <location>
        <begin position="288"/>
        <end position="325"/>
    </location>
</feature>
<feature type="repeat" description="LRR 1">
    <location>
        <begin position="349"/>
        <end position="369"/>
    </location>
</feature>
<feature type="repeat" description="LRR 2">
    <location>
        <begin position="375"/>
        <end position="396"/>
    </location>
</feature>
<feature type="repeat" description="LRR 3">
    <location>
        <begin position="397"/>
        <end position="417"/>
    </location>
</feature>
<feature type="repeat" description="LRR 4">
    <location>
        <begin position="420"/>
        <end position="440"/>
    </location>
</feature>
<feature type="repeat" description="LRR 5">
    <location>
        <begin position="446"/>
        <end position="466"/>
    </location>
</feature>
<feature type="repeat" description="LRR 6">
    <location>
        <begin position="467"/>
        <end position="488"/>
    </location>
</feature>
<feature type="repeat" description="LRR 7">
    <location>
        <begin position="491"/>
        <end position="511"/>
    </location>
</feature>
<feature type="repeat" description="LRR 8">
    <location>
        <begin position="517"/>
        <end position="538"/>
    </location>
</feature>
<feature type="repeat" description="LRR 9">
    <location>
        <begin position="539"/>
        <end position="559"/>
    </location>
</feature>
<feature type="repeat" description="LRR 10">
    <location>
        <begin position="563"/>
        <end position="583"/>
    </location>
</feature>
<feature type="repeat" description="LRR 11">
    <location>
        <begin position="590"/>
        <end position="611"/>
    </location>
</feature>
<feature type="repeat" description="LRR 12">
    <location>
        <begin position="613"/>
        <end position="634"/>
    </location>
</feature>
<feature type="repeat" description="LRR 13">
    <location>
        <begin position="642"/>
        <end position="665"/>
    </location>
</feature>
<feature type="region of interest" description="Disordered" evidence="4">
    <location>
        <begin position="189"/>
        <end position="293"/>
    </location>
</feature>
<feature type="short sequence motif" description="Cell attachment site" evidence="2">
    <location>
        <begin position="275"/>
        <end position="277"/>
    </location>
</feature>
<feature type="compositionally biased region" description="Acidic residues" evidence="4">
    <location>
        <begin position="189"/>
        <end position="198"/>
    </location>
</feature>
<feature type="compositionally biased region" description="Basic and acidic residues" evidence="4">
    <location>
        <begin position="223"/>
        <end position="238"/>
    </location>
</feature>
<feature type="compositionally biased region" description="Acidic residues" evidence="4">
    <location>
        <begin position="249"/>
        <end position="272"/>
    </location>
</feature>
<feature type="glycosylation site" description="N-linked (GlcNAc...) asparagine" evidence="2">
    <location>
        <position position="359"/>
    </location>
</feature>
<feature type="glycosylation site" description="N-linked (GlcNAc...) asparagine" evidence="2">
    <location>
        <position position="430"/>
    </location>
</feature>
<feature type="glycosylation site" description="N-linked (GlcNAc...) asparagine" evidence="2">
    <location>
        <position position="487"/>
    </location>
</feature>
<accession>Q3MHH9</accession>
<name>ECM2_BOVIN</name>
<evidence type="ECO:0000250" key="1">
    <source>
        <dbReference type="UniProtKB" id="Q5FW85"/>
    </source>
</evidence>
<evidence type="ECO:0000255" key="2"/>
<evidence type="ECO:0000255" key="3">
    <source>
        <dbReference type="PROSITE-ProRule" id="PRU00220"/>
    </source>
</evidence>
<evidence type="ECO:0000256" key="4">
    <source>
        <dbReference type="SAM" id="MobiDB-lite"/>
    </source>
</evidence>
<evidence type="ECO:0000305" key="5"/>